<sequence length="352" mass="40464">MKLSQFKFKLPEEKIALHPTKYRDESRLMVLHKRTGEIEHKMFKDILNYFDDKDVFVFNDTKVFPARLYGNKEKTGARIEVFLLRELNEELRLWDVLVDPARKIRIGNKLYFGDDDSMVAEVIDNTTSRGRTLRFLYDGPHDEFKKALYALGETPLPHTILNRPVEEEDAERFQSIFAKNEGAVTAPTASLHFSRELMKRMEIKGIDFAYITLHAGLGNFRDIDVEDLTKHKMDSEQMFVTEEAVKIVNRAKDLGKNVCAVGTTVMRAIESTVSTDGHLKEYEGWTNKFIFPPYDFTVANAMVSNFHMPLSTLLMIVAAFGGYDQVMDAYHIALKEGYRFGTYGDAMLILDK</sequence>
<reference key="1">
    <citation type="journal article" date="2005" name="Science">
        <title>Extensive DNA inversions in the B. fragilis genome control variable gene expression.</title>
        <authorList>
            <person name="Cerdeno-Tarraga A.-M."/>
            <person name="Patrick S."/>
            <person name="Crossman L.C."/>
            <person name="Blakely G."/>
            <person name="Abratt V."/>
            <person name="Lennard N."/>
            <person name="Poxton I."/>
            <person name="Duerden B."/>
            <person name="Harris B."/>
            <person name="Quail M.A."/>
            <person name="Barron A."/>
            <person name="Clark L."/>
            <person name="Corton C."/>
            <person name="Doggett J."/>
            <person name="Holden M.T.G."/>
            <person name="Larke N."/>
            <person name="Line A."/>
            <person name="Lord A."/>
            <person name="Norbertczak H."/>
            <person name="Ormond D."/>
            <person name="Price C."/>
            <person name="Rabbinowitsch E."/>
            <person name="Woodward J."/>
            <person name="Barrell B.G."/>
            <person name="Parkhill J."/>
        </authorList>
    </citation>
    <scope>NUCLEOTIDE SEQUENCE [LARGE SCALE GENOMIC DNA]</scope>
    <source>
        <strain>ATCC 25285 / DSM 2151 / CCUG 4856 / JCM 11019 / LMG 10263 / NCTC 9343 / Onslow / VPI 2553 / EN-2</strain>
    </source>
</reference>
<dbReference type="EC" id="2.4.99.17" evidence="1"/>
<dbReference type="EMBL" id="CR626927">
    <property type="protein sequence ID" value="CAH05848.1"/>
    <property type="molecule type" value="Genomic_DNA"/>
</dbReference>
<dbReference type="RefSeq" id="WP_005783637.1">
    <property type="nucleotide sequence ID" value="NZ_UFTH01000001.1"/>
</dbReference>
<dbReference type="SMR" id="Q5LJ28"/>
<dbReference type="PaxDb" id="272559-BF9343_0069"/>
<dbReference type="GeneID" id="60367831"/>
<dbReference type="KEGG" id="bfs:BF9343_0069"/>
<dbReference type="eggNOG" id="COG0809">
    <property type="taxonomic scope" value="Bacteria"/>
</dbReference>
<dbReference type="HOGENOM" id="CLU_039110_1_0_10"/>
<dbReference type="UniPathway" id="UPA00392"/>
<dbReference type="Proteomes" id="UP000006731">
    <property type="component" value="Chromosome"/>
</dbReference>
<dbReference type="GO" id="GO:0005737">
    <property type="term" value="C:cytoplasm"/>
    <property type="evidence" value="ECO:0007669"/>
    <property type="project" value="UniProtKB-SubCell"/>
</dbReference>
<dbReference type="GO" id="GO:0051075">
    <property type="term" value="F:S-adenosylmethionine:tRNA ribosyltransferase-isomerase activity"/>
    <property type="evidence" value="ECO:0007669"/>
    <property type="project" value="UniProtKB-EC"/>
</dbReference>
<dbReference type="GO" id="GO:0008616">
    <property type="term" value="P:queuosine biosynthetic process"/>
    <property type="evidence" value="ECO:0007669"/>
    <property type="project" value="UniProtKB-UniRule"/>
</dbReference>
<dbReference type="GO" id="GO:0002099">
    <property type="term" value="P:tRNA wobble guanine modification"/>
    <property type="evidence" value="ECO:0007669"/>
    <property type="project" value="TreeGrafter"/>
</dbReference>
<dbReference type="FunFam" id="2.40.10.240:FF:000002">
    <property type="entry name" value="S-adenosylmethionine:tRNA ribosyltransferase-isomerase"/>
    <property type="match status" value="1"/>
</dbReference>
<dbReference type="FunFam" id="3.40.1780.10:FF:000001">
    <property type="entry name" value="S-adenosylmethionine:tRNA ribosyltransferase-isomerase"/>
    <property type="match status" value="1"/>
</dbReference>
<dbReference type="Gene3D" id="2.40.10.240">
    <property type="entry name" value="QueA-like"/>
    <property type="match status" value="1"/>
</dbReference>
<dbReference type="Gene3D" id="3.40.1780.10">
    <property type="entry name" value="QueA-like"/>
    <property type="match status" value="1"/>
</dbReference>
<dbReference type="HAMAP" id="MF_00113">
    <property type="entry name" value="QueA"/>
    <property type="match status" value="1"/>
</dbReference>
<dbReference type="InterPro" id="IPR003699">
    <property type="entry name" value="QueA"/>
</dbReference>
<dbReference type="InterPro" id="IPR042118">
    <property type="entry name" value="QueA_dom1"/>
</dbReference>
<dbReference type="InterPro" id="IPR042119">
    <property type="entry name" value="QueA_dom2"/>
</dbReference>
<dbReference type="InterPro" id="IPR036100">
    <property type="entry name" value="QueA_sf"/>
</dbReference>
<dbReference type="NCBIfam" id="NF001140">
    <property type="entry name" value="PRK00147.1"/>
    <property type="match status" value="1"/>
</dbReference>
<dbReference type="NCBIfam" id="TIGR00113">
    <property type="entry name" value="queA"/>
    <property type="match status" value="1"/>
</dbReference>
<dbReference type="PANTHER" id="PTHR30307">
    <property type="entry name" value="S-ADENOSYLMETHIONINE:TRNA RIBOSYLTRANSFERASE-ISOMERASE"/>
    <property type="match status" value="1"/>
</dbReference>
<dbReference type="PANTHER" id="PTHR30307:SF0">
    <property type="entry name" value="S-ADENOSYLMETHIONINE:TRNA RIBOSYLTRANSFERASE-ISOMERASE"/>
    <property type="match status" value="1"/>
</dbReference>
<dbReference type="Pfam" id="PF02547">
    <property type="entry name" value="Queuosine_synth"/>
    <property type="match status" value="1"/>
</dbReference>
<dbReference type="SUPFAM" id="SSF111337">
    <property type="entry name" value="QueA-like"/>
    <property type="match status" value="1"/>
</dbReference>
<protein>
    <recommendedName>
        <fullName evidence="1">S-adenosylmethionine:tRNA ribosyltransferase-isomerase</fullName>
        <ecNumber evidence="1">2.4.99.17</ecNumber>
    </recommendedName>
    <alternativeName>
        <fullName evidence="1">Queuosine biosynthesis protein QueA</fullName>
    </alternativeName>
</protein>
<feature type="chain" id="PRO_0000231319" description="S-adenosylmethionine:tRNA ribosyltransferase-isomerase">
    <location>
        <begin position="1"/>
        <end position="352"/>
    </location>
</feature>
<keyword id="KW-0963">Cytoplasm</keyword>
<keyword id="KW-0671">Queuosine biosynthesis</keyword>
<keyword id="KW-0949">S-adenosyl-L-methionine</keyword>
<keyword id="KW-0808">Transferase</keyword>
<accession>Q5LJ28</accession>
<proteinExistence type="inferred from homology"/>
<evidence type="ECO:0000255" key="1">
    <source>
        <dbReference type="HAMAP-Rule" id="MF_00113"/>
    </source>
</evidence>
<name>QUEA_BACFN</name>
<gene>
    <name evidence="1" type="primary">queA</name>
    <name type="ordered locus">BF0070</name>
</gene>
<organism>
    <name type="scientific">Bacteroides fragilis (strain ATCC 25285 / DSM 2151 / CCUG 4856 / JCM 11019 / LMG 10263 / NCTC 9343 / Onslow / VPI 2553 / EN-2)</name>
    <dbReference type="NCBI Taxonomy" id="272559"/>
    <lineage>
        <taxon>Bacteria</taxon>
        <taxon>Pseudomonadati</taxon>
        <taxon>Bacteroidota</taxon>
        <taxon>Bacteroidia</taxon>
        <taxon>Bacteroidales</taxon>
        <taxon>Bacteroidaceae</taxon>
        <taxon>Bacteroides</taxon>
    </lineage>
</organism>
<comment type="function">
    <text evidence="1">Transfers and isomerizes the ribose moiety from AdoMet to the 7-aminomethyl group of 7-deazaguanine (preQ1-tRNA) to give epoxyqueuosine (oQ-tRNA).</text>
</comment>
<comment type="catalytic activity">
    <reaction evidence="1">
        <text>7-aminomethyl-7-carbaguanosine(34) in tRNA + S-adenosyl-L-methionine = epoxyqueuosine(34) in tRNA + adenine + L-methionine + 2 H(+)</text>
        <dbReference type="Rhea" id="RHEA:32155"/>
        <dbReference type="Rhea" id="RHEA-COMP:10342"/>
        <dbReference type="Rhea" id="RHEA-COMP:18582"/>
        <dbReference type="ChEBI" id="CHEBI:15378"/>
        <dbReference type="ChEBI" id="CHEBI:16708"/>
        <dbReference type="ChEBI" id="CHEBI:57844"/>
        <dbReference type="ChEBI" id="CHEBI:59789"/>
        <dbReference type="ChEBI" id="CHEBI:82833"/>
        <dbReference type="ChEBI" id="CHEBI:194443"/>
        <dbReference type="EC" id="2.4.99.17"/>
    </reaction>
</comment>
<comment type="pathway">
    <text evidence="1">tRNA modification; tRNA-queuosine biosynthesis.</text>
</comment>
<comment type="subunit">
    <text evidence="1">Monomer.</text>
</comment>
<comment type="subcellular location">
    <subcellularLocation>
        <location evidence="1">Cytoplasm</location>
    </subcellularLocation>
</comment>
<comment type="similarity">
    <text evidence="1">Belongs to the QueA family.</text>
</comment>